<dbReference type="EC" id="2.1.1.222" evidence="1"/>
<dbReference type="EC" id="2.1.1.64" evidence="1"/>
<dbReference type="EMBL" id="CP000967">
    <property type="protein sequence ID" value="ACD58589.1"/>
    <property type="molecule type" value="Genomic_DNA"/>
</dbReference>
<dbReference type="RefSeq" id="WP_011259306.1">
    <property type="nucleotide sequence ID" value="NC_010717.2"/>
</dbReference>
<dbReference type="SMR" id="B2SHS9"/>
<dbReference type="KEGG" id="xop:PXO_00379"/>
<dbReference type="eggNOG" id="COG2227">
    <property type="taxonomic scope" value="Bacteria"/>
</dbReference>
<dbReference type="HOGENOM" id="CLU_042432_5_0_6"/>
<dbReference type="UniPathway" id="UPA00232"/>
<dbReference type="Proteomes" id="UP000001740">
    <property type="component" value="Chromosome"/>
</dbReference>
<dbReference type="GO" id="GO:0102208">
    <property type="term" value="F:2-polyprenyl-6-hydroxyphenol methylase activity"/>
    <property type="evidence" value="ECO:0007669"/>
    <property type="project" value="UniProtKB-EC"/>
</dbReference>
<dbReference type="GO" id="GO:0061542">
    <property type="term" value="F:3-demethylubiquinol 3-O-methyltransferase activity"/>
    <property type="evidence" value="ECO:0007669"/>
    <property type="project" value="UniProtKB-UniRule"/>
</dbReference>
<dbReference type="GO" id="GO:0010420">
    <property type="term" value="F:polyprenyldihydroxybenzoate methyltransferase activity"/>
    <property type="evidence" value="ECO:0007669"/>
    <property type="project" value="InterPro"/>
</dbReference>
<dbReference type="GO" id="GO:0032259">
    <property type="term" value="P:methylation"/>
    <property type="evidence" value="ECO:0007669"/>
    <property type="project" value="UniProtKB-KW"/>
</dbReference>
<dbReference type="CDD" id="cd02440">
    <property type="entry name" value="AdoMet_MTases"/>
    <property type="match status" value="1"/>
</dbReference>
<dbReference type="FunFam" id="3.40.50.150:FF:000028">
    <property type="entry name" value="Ubiquinone biosynthesis O-methyltransferase"/>
    <property type="match status" value="1"/>
</dbReference>
<dbReference type="Gene3D" id="3.40.50.150">
    <property type="entry name" value="Vaccinia Virus protein VP39"/>
    <property type="match status" value="1"/>
</dbReference>
<dbReference type="HAMAP" id="MF_00472">
    <property type="entry name" value="UbiG"/>
    <property type="match status" value="1"/>
</dbReference>
<dbReference type="InterPro" id="IPR029063">
    <property type="entry name" value="SAM-dependent_MTases_sf"/>
</dbReference>
<dbReference type="InterPro" id="IPR010233">
    <property type="entry name" value="UbiG_MeTrfase"/>
</dbReference>
<dbReference type="NCBIfam" id="TIGR01983">
    <property type="entry name" value="UbiG"/>
    <property type="match status" value="1"/>
</dbReference>
<dbReference type="PANTHER" id="PTHR43464">
    <property type="entry name" value="METHYLTRANSFERASE"/>
    <property type="match status" value="1"/>
</dbReference>
<dbReference type="PANTHER" id="PTHR43464:SF19">
    <property type="entry name" value="UBIQUINONE BIOSYNTHESIS O-METHYLTRANSFERASE, MITOCHONDRIAL"/>
    <property type="match status" value="1"/>
</dbReference>
<dbReference type="Pfam" id="PF13489">
    <property type="entry name" value="Methyltransf_23"/>
    <property type="match status" value="1"/>
</dbReference>
<dbReference type="SUPFAM" id="SSF53335">
    <property type="entry name" value="S-adenosyl-L-methionine-dependent methyltransferases"/>
    <property type="match status" value="1"/>
</dbReference>
<proteinExistence type="inferred from homology"/>
<keyword id="KW-0489">Methyltransferase</keyword>
<keyword id="KW-0949">S-adenosyl-L-methionine</keyword>
<keyword id="KW-0808">Transferase</keyword>
<keyword id="KW-0831">Ubiquinone biosynthesis</keyword>
<reference key="1">
    <citation type="journal article" date="2008" name="BMC Genomics">
        <title>Genome sequence and rapid evolution of the rice pathogen Xanthomonas oryzae pv. oryzae PXO99A.</title>
        <authorList>
            <person name="Salzberg S.L."/>
            <person name="Sommer D.D."/>
            <person name="Schatz M.C."/>
            <person name="Phillippy A.M."/>
            <person name="Rabinowicz P.D."/>
            <person name="Tsuge S."/>
            <person name="Furutani A."/>
            <person name="Ochiai H."/>
            <person name="Delcher A.L."/>
            <person name="Kelley D."/>
            <person name="Madupu R."/>
            <person name="Puiu D."/>
            <person name="Radune D."/>
            <person name="Shumway M."/>
            <person name="Trapnell C."/>
            <person name="Aparna G."/>
            <person name="Jha G."/>
            <person name="Pandey A."/>
            <person name="Patil P.B."/>
            <person name="Ishihara H."/>
            <person name="Meyer D.F."/>
            <person name="Szurek B."/>
            <person name="Verdier V."/>
            <person name="Koebnik R."/>
            <person name="Dow J.M."/>
            <person name="Ryan R.P."/>
            <person name="Hirata H."/>
            <person name="Tsuyumu S."/>
            <person name="Won Lee S."/>
            <person name="Seo Y.-S."/>
            <person name="Sriariyanum M."/>
            <person name="Ronald P.C."/>
            <person name="Sonti R.V."/>
            <person name="Van Sluys M.-A."/>
            <person name="Leach J.E."/>
            <person name="White F.F."/>
            <person name="Bogdanove A.J."/>
        </authorList>
    </citation>
    <scope>NUCLEOTIDE SEQUENCE [LARGE SCALE GENOMIC DNA]</scope>
    <source>
        <strain>PXO99A</strain>
    </source>
</reference>
<gene>
    <name evidence="1" type="primary">ubiG</name>
    <name type="ordered locus">PXO_00379</name>
</gene>
<accession>B2SHS9</accession>
<protein>
    <recommendedName>
        <fullName evidence="1">Ubiquinone biosynthesis O-methyltransferase</fullName>
    </recommendedName>
    <alternativeName>
        <fullName evidence="1">2-polyprenyl-6-hydroxyphenol methylase</fullName>
        <ecNumber evidence="1">2.1.1.222</ecNumber>
    </alternativeName>
    <alternativeName>
        <fullName evidence="1">3-demethylubiquinone 3-O-methyltransferase</fullName>
        <ecNumber evidence="1">2.1.1.64</ecNumber>
    </alternativeName>
</protein>
<sequence length="239" mass="26177">MNSNTQPASGNFHQSELDKFAALANRWWDADGPQKPLHALNPVRLDYVSARLDLAGARVLDVGCGGGLLSESMARLGAQVTAIDLAPELVKVARLHGLESSVQVDYRVQSVEDLAAEQTGSFDAVTCMEMLEHVPDPTAIIRACARLLKPGGKLFLSTLNRTPAAFALAVVGAEYIARLLPRGTHHYKDFIKPAELAAWLRNAELQLEDVSGMLYEPWRNRARLSSRTEVNYLAYAVKP</sequence>
<name>UBIG_XANOP</name>
<comment type="function">
    <text evidence="1">O-methyltransferase that catalyzes the 2 O-methylation steps in the ubiquinone biosynthetic pathway.</text>
</comment>
<comment type="catalytic activity">
    <reaction evidence="1">
        <text>a 3-demethylubiquinol + S-adenosyl-L-methionine = a ubiquinol + S-adenosyl-L-homocysteine + H(+)</text>
        <dbReference type="Rhea" id="RHEA:44380"/>
        <dbReference type="Rhea" id="RHEA-COMP:9566"/>
        <dbReference type="Rhea" id="RHEA-COMP:10914"/>
        <dbReference type="ChEBI" id="CHEBI:15378"/>
        <dbReference type="ChEBI" id="CHEBI:17976"/>
        <dbReference type="ChEBI" id="CHEBI:57856"/>
        <dbReference type="ChEBI" id="CHEBI:59789"/>
        <dbReference type="ChEBI" id="CHEBI:84422"/>
        <dbReference type="EC" id="2.1.1.64"/>
    </reaction>
</comment>
<comment type="catalytic activity">
    <reaction evidence="1">
        <text>a 3-(all-trans-polyprenyl)benzene-1,2-diol + S-adenosyl-L-methionine = a 2-methoxy-6-(all-trans-polyprenyl)phenol + S-adenosyl-L-homocysteine + H(+)</text>
        <dbReference type="Rhea" id="RHEA:31411"/>
        <dbReference type="Rhea" id="RHEA-COMP:9550"/>
        <dbReference type="Rhea" id="RHEA-COMP:9551"/>
        <dbReference type="ChEBI" id="CHEBI:15378"/>
        <dbReference type="ChEBI" id="CHEBI:57856"/>
        <dbReference type="ChEBI" id="CHEBI:59789"/>
        <dbReference type="ChEBI" id="CHEBI:62729"/>
        <dbReference type="ChEBI" id="CHEBI:62731"/>
        <dbReference type="EC" id="2.1.1.222"/>
    </reaction>
</comment>
<comment type="pathway">
    <text evidence="1">Cofactor biosynthesis; ubiquinone biosynthesis.</text>
</comment>
<comment type="similarity">
    <text evidence="1">Belongs to the methyltransferase superfamily. UbiG/COQ3 family.</text>
</comment>
<evidence type="ECO:0000255" key="1">
    <source>
        <dbReference type="HAMAP-Rule" id="MF_00472"/>
    </source>
</evidence>
<feature type="chain" id="PRO_1000199706" description="Ubiquinone biosynthesis O-methyltransferase">
    <location>
        <begin position="1"/>
        <end position="239"/>
    </location>
</feature>
<feature type="binding site" evidence="1">
    <location>
        <position position="44"/>
    </location>
    <ligand>
        <name>S-adenosyl-L-methionine</name>
        <dbReference type="ChEBI" id="CHEBI:59789"/>
    </ligand>
</feature>
<feature type="binding site" evidence="1">
    <location>
        <position position="63"/>
    </location>
    <ligand>
        <name>S-adenosyl-L-methionine</name>
        <dbReference type="ChEBI" id="CHEBI:59789"/>
    </ligand>
</feature>
<feature type="binding site" evidence="1">
    <location>
        <position position="84"/>
    </location>
    <ligand>
        <name>S-adenosyl-L-methionine</name>
        <dbReference type="ChEBI" id="CHEBI:59789"/>
    </ligand>
</feature>
<feature type="binding site" evidence="1">
    <location>
        <position position="128"/>
    </location>
    <ligand>
        <name>S-adenosyl-L-methionine</name>
        <dbReference type="ChEBI" id="CHEBI:59789"/>
    </ligand>
</feature>
<organism>
    <name type="scientific">Xanthomonas oryzae pv. oryzae (strain PXO99A)</name>
    <dbReference type="NCBI Taxonomy" id="360094"/>
    <lineage>
        <taxon>Bacteria</taxon>
        <taxon>Pseudomonadati</taxon>
        <taxon>Pseudomonadota</taxon>
        <taxon>Gammaproteobacteria</taxon>
        <taxon>Lysobacterales</taxon>
        <taxon>Lysobacteraceae</taxon>
        <taxon>Xanthomonas</taxon>
    </lineage>
</organism>